<keyword id="KW-0002">3D-structure</keyword>
<keyword id="KW-0025">Alternative splicing</keyword>
<keyword id="KW-0963">Cytoplasm</keyword>
<keyword id="KW-0472">Membrane</keyword>
<keyword id="KW-0488">Methylation</keyword>
<keyword id="KW-0539">Nucleus</keyword>
<keyword id="KW-0597">Phosphoprotein</keyword>
<keyword id="KW-1267">Proteomics identification</keyword>
<keyword id="KW-1185">Reference proteome</keyword>
<keyword id="KW-0727">SH2 domain</keyword>
<sequence>MNGAPSPEDGASPSSPPLPPPPPPSWREFCESHARAAALDFARRFRLYLASHPQYAGPGAEAAFSRRFAELFLQHFEAEVARASGSLSPPILAPLSPGAEISPHDLSLESCRVGGPLAVLGPSRSSEDLAGPLPSSVSSSSTTSSKPKLKKRFSLRSVGRSVRGSVRGILQWRGTVDPPSSAGPLETSSGPPVLGGNSNSNSSGGAGTVGRGLVSDGTSPGERWTHRFERLRLSRGGGALKDGAGMVQREELLSFMGAEEAAPDPAGVGRGGGVAGPPSGGGGQPQWQKCRLLLRSEGEGGGGSRLEFFVPPKASRPRLSIPCSSITDVRTTTALEMPDRENTFVVKVEGPSEYIMETVDAQHVKAWVSDIQECLSPGPCPATSPRPMTLPLAPGTSFLTRENTDSLELSCLNHSESLPSQDLLLGPSESNDRLSQGAYGGLSDRPSASISPSSASIAASHFDSMELLPPELPPRIPIEEGPPTGTVHPLSAPYPPLDTPETATGSFLFQGEPEGGEGDQPLSGYPWFHGMLSRLKAAQLVLTGGTGSHGVFLVRQSETRRGEYVLTFNFQGKAKHLRLSLNEEGQCRVQHLWFQSIFDMLEHFRVHPIPLESGGSSDVVLVSYVPSSQRQQEPTTSHDPPQPPEPPSWTDPPQPGAEEASRAPEVAAAAAAAAKERQEKEKAGGGGVPEELVPVVELVPVVELEEAIAPGSEAQGAGSGGDAGVPPMVQLQQSPLGGDGEEGGHPRAINNQYSFV</sequence>
<organism>
    <name type="scientific">Homo sapiens</name>
    <name type="common">Human</name>
    <dbReference type="NCBI Taxonomy" id="9606"/>
    <lineage>
        <taxon>Eukaryota</taxon>
        <taxon>Metazoa</taxon>
        <taxon>Chordata</taxon>
        <taxon>Craniata</taxon>
        <taxon>Vertebrata</taxon>
        <taxon>Euteleostomi</taxon>
        <taxon>Mammalia</taxon>
        <taxon>Eutheria</taxon>
        <taxon>Euarchontoglires</taxon>
        <taxon>Primates</taxon>
        <taxon>Haplorrhini</taxon>
        <taxon>Catarrhini</taxon>
        <taxon>Hominidae</taxon>
        <taxon>Homo</taxon>
    </lineage>
</organism>
<name>SH2B1_HUMAN</name>
<feature type="chain" id="PRO_0000323593" description="SH2B adapter protein 1">
    <location>
        <begin position="1"/>
        <end position="756"/>
    </location>
</feature>
<feature type="domain" description="PH">
    <location>
        <begin position="267"/>
        <end position="376"/>
    </location>
</feature>
<feature type="domain" description="SH2" evidence="4">
    <location>
        <begin position="527"/>
        <end position="625"/>
    </location>
</feature>
<feature type="region of interest" description="Interaction with JAK2 (low-affinity binding; independent of JAK2 phosphorylation)" evidence="1">
    <location>
        <begin position="1"/>
        <end position="555"/>
    </location>
</feature>
<feature type="region of interest" description="Disordered" evidence="5">
    <location>
        <begin position="1"/>
        <end position="27"/>
    </location>
</feature>
<feature type="region of interest" description="Required for self-association">
    <location>
        <begin position="24"/>
        <end position="85"/>
    </location>
</feature>
<feature type="region of interest" description="Interaction with RAC1" evidence="1">
    <location>
        <begin position="85"/>
        <end position="196"/>
    </location>
</feature>
<feature type="region of interest" description="Required for NGF signaling" evidence="1">
    <location>
        <begin position="100"/>
        <end position="243"/>
    </location>
</feature>
<feature type="region of interest" description="Disordered" evidence="5">
    <location>
        <begin position="123"/>
        <end position="154"/>
    </location>
</feature>
<feature type="region of interest" description="Disordered" evidence="5">
    <location>
        <begin position="169"/>
        <end position="222"/>
    </location>
</feature>
<feature type="region of interest" description="Required for nuclear localization" evidence="1">
    <location>
        <begin position="224"/>
        <end position="233"/>
    </location>
</feature>
<feature type="region of interest" description="Disordered" evidence="5">
    <location>
        <begin position="263"/>
        <end position="286"/>
    </location>
</feature>
<feature type="region of interest" description="Disordered" evidence="5">
    <location>
        <begin position="420"/>
        <end position="455"/>
    </location>
</feature>
<feature type="region of interest" description="Disordered" evidence="5">
    <location>
        <begin position="468"/>
        <end position="491"/>
    </location>
</feature>
<feature type="region of interest" description="Disordered" evidence="5">
    <location>
        <begin position="626"/>
        <end position="688"/>
    </location>
</feature>
<feature type="region of interest" description="Disordered" evidence="5">
    <location>
        <begin position="709"/>
        <end position="756"/>
    </location>
</feature>
<feature type="compositionally biased region" description="Pro residues" evidence="5">
    <location>
        <begin position="14"/>
        <end position="25"/>
    </location>
</feature>
<feature type="compositionally biased region" description="Low complexity" evidence="5">
    <location>
        <begin position="132"/>
        <end position="146"/>
    </location>
</feature>
<feature type="compositionally biased region" description="Low complexity" evidence="5">
    <location>
        <begin position="188"/>
        <end position="203"/>
    </location>
</feature>
<feature type="compositionally biased region" description="Gly residues" evidence="5">
    <location>
        <begin position="268"/>
        <end position="284"/>
    </location>
</feature>
<feature type="compositionally biased region" description="Low complexity" evidence="5">
    <location>
        <begin position="446"/>
        <end position="455"/>
    </location>
</feature>
<feature type="compositionally biased region" description="Pro residues" evidence="5">
    <location>
        <begin position="640"/>
        <end position="655"/>
    </location>
</feature>
<feature type="compositionally biased region" description="Low complexity" evidence="5">
    <location>
        <begin position="663"/>
        <end position="673"/>
    </location>
</feature>
<feature type="compositionally biased region" description="Basic and acidic residues" evidence="5">
    <location>
        <begin position="674"/>
        <end position="683"/>
    </location>
</feature>
<feature type="modified residue" description="Phosphoserine" evidence="3">
    <location>
        <position position="88"/>
    </location>
</feature>
<feature type="modified residue" description="Phosphoserine" evidence="22 23">
    <location>
        <position position="96"/>
    </location>
</feature>
<feature type="modified residue" description="Omega-N-methylarginine" evidence="24">
    <location>
        <position position="270"/>
    </location>
</feature>
<feature type="modified residue" description="Phosphoserine" evidence="3">
    <location>
        <position position="417"/>
    </location>
</feature>
<feature type="modified residue" description="Phosphoserine" evidence="3">
    <location>
        <position position="420"/>
    </location>
</feature>
<feature type="modified residue" description="Phosphotyrosine; by JAK1, JAK2 and PDGFR" evidence="2">
    <location>
        <position position="439"/>
    </location>
</feature>
<feature type="modified residue" description="Phosphotyrosine; by JAK1, JAK2" evidence="2">
    <location>
        <position position="494"/>
    </location>
</feature>
<feature type="splice variant" id="VSP_032027" description="In isoform 2." evidence="16 17 18 19 20">
    <original>EPTTSHDPPQPPEPPSWTDPPQPGAEEASRAPEVAAAAAAAAKERQEKEKAGGGGVPEELVPVVELVPVVELEEAIAPGSEAQGAGSGGDAGVPPMVQLQQSPLGGDGEEGGHPRAINNQYSFV</original>
    <variation>GREQAGSHAGVCEGDGCHPDASCTLMPFGASDCVTDHLP</variation>
    <location>
        <begin position="633"/>
        <end position="756"/>
    </location>
</feature>
<feature type="splice variant" id="VSP_032028" description="In isoform 3." evidence="19 20">
    <original>EPTTSHDPPQPPEPPSWTDPPQPGAEEASRAPEVAAAAAAAAKERQEKEKAGGGGVPEELVPVVELVPVVELEEAIAPGSEAQGAGSGGDAGVPPMVQLQQSPLGGDGEEGGHPRAINNQYSFV</original>
    <variation>GEQSRSAGEEVPVHPRSEAGSRLGAMRGCAREMDATPMPPAPSCPSERVTV</variation>
    <location>
        <begin position="633"/>
        <end position="756"/>
    </location>
</feature>
<feature type="sequence variant" id="VAR_039550" description="In dbSNP:rs7498665." evidence="10 13">
    <original>T</original>
    <variation>A</variation>
    <location>
        <position position="484"/>
    </location>
</feature>
<feature type="sequence variant" id="VAR_039551" description="In dbSNP:rs17850682." evidence="6">
    <original>V</original>
    <variation>A</variation>
    <location>
        <position position="541"/>
    </location>
</feature>
<feature type="mutagenesis site" description="Abolishes self-association and interaction with INSR and IGF1R." evidence="10">
    <original>F</original>
    <variation>R</variation>
    <location>
        <position position="29"/>
    </location>
</feature>
<feature type="mutagenesis site" description="Abolishes self-association and interaction with INSR and IGF1R." evidence="10">
    <original>A</original>
    <variation>D</variation>
    <location>
        <position position="34"/>
    </location>
</feature>
<feature type="mutagenesis site" description="Abolishes self-association and interaction with INSR and IGF1R." evidence="10">
    <original>A</original>
    <variation>D</variation>
    <location>
        <position position="38"/>
    </location>
</feature>
<feature type="mutagenesis site" description="Abolishes self-association and interaction with INSR and IGF1R." evidence="10">
    <original>F</original>
    <variation>A</variation>
    <location>
        <position position="41"/>
    </location>
</feature>
<feature type="mutagenesis site" description="Abolishes self-association and interaction with INSR and IGF1R." evidence="10">
    <original>A</original>
    <variation>D</variation>
    <location>
        <position position="42"/>
    </location>
</feature>
<feature type="mutagenesis site" description="Abolishes self-association and interaction with INSR and IGF1R." evidence="10">
    <original>Y</original>
    <variation>A</variation>
    <location>
        <position position="48"/>
    </location>
</feature>
<feature type="mutagenesis site" description="Abolishes self-association and interaction with INSR and IGF1R." evidence="10">
    <original>F</original>
    <variation>A</variation>
    <location>
        <position position="68"/>
    </location>
</feature>
<feature type="mutagenesis site" description="Abolishes self-association and interaction with INSR and IGF1R." evidence="10">
    <original>F</original>
    <variation>A</variation>
    <location>
        <position position="72"/>
    </location>
</feature>
<feature type="mutagenesis site" description="Abolishes self-association and interaction with INSR and IGF1R." evidence="10">
    <original>R</original>
    <variation>A</variation>
    <location>
        <position position="555"/>
    </location>
</feature>
<feature type="sequence conflict" description="In Ref. 3; BAF83021." evidence="21" ref="3">
    <original>N</original>
    <variation>D</variation>
    <location>
        <position position="197"/>
    </location>
</feature>
<feature type="sequence conflict" description="In Ref. 3; BAF83021." evidence="21" ref="3">
    <original>D</original>
    <variation>G</variation>
    <location>
        <position position="519"/>
    </location>
</feature>
<feature type="helix" evidence="25">
    <location>
        <begin position="522"/>
        <end position="524"/>
    </location>
</feature>
<feature type="strand" evidence="25">
    <location>
        <begin position="528"/>
        <end position="531"/>
    </location>
</feature>
<feature type="helix" evidence="25">
    <location>
        <begin position="534"/>
        <end position="542"/>
    </location>
</feature>
<feature type="helix" evidence="25">
    <location>
        <begin position="545"/>
        <end position="548"/>
    </location>
</feature>
<feature type="strand" evidence="25">
    <location>
        <begin position="551"/>
        <end position="556"/>
    </location>
</feature>
<feature type="strand" evidence="25">
    <location>
        <begin position="558"/>
        <end position="560"/>
    </location>
</feature>
<feature type="strand" evidence="25">
    <location>
        <begin position="564"/>
        <end position="570"/>
    </location>
</feature>
<feature type="strand" evidence="25">
    <location>
        <begin position="573"/>
        <end position="581"/>
    </location>
</feature>
<feature type="strand" evidence="25">
    <location>
        <begin position="587"/>
        <end position="589"/>
    </location>
</feature>
<feature type="strand" evidence="25">
    <location>
        <begin position="592"/>
        <end position="596"/>
    </location>
</feature>
<feature type="helix" evidence="25">
    <location>
        <begin position="597"/>
        <end position="606"/>
    </location>
</feature>
<feature type="strand" evidence="25">
    <location>
        <begin position="614"/>
        <end position="616"/>
    </location>
</feature>
<dbReference type="EMBL" id="AF227967">
    <property type="protein sequence ID" value="AAF73912.1"/>
    <property type="molecule type" value="mRNA"/>
</dbReference>
<dbReference type="EMBL" id="AF227968">
    <property type="protein sequence ID" value="AAF73913.1"/>
    <property type="molecule type" value="mRNA"/>
</dbReference>
<dbReference type="EMBL" id="AF227969">
    <property type="protein sequence ID" value="AAF73914.1"/>
    <property type="molecule type" value="mRNA"/>
</dbReference>
<dbReference type="EMBL" id="AB037720">
    <property type="protein sequence ID" value="BAA92537.1"/>
    <property type="status" value="ALT_INIT"/>
    <property type="molecule type" value="mRNA"/>
</dbReference>
<dbReference type="EMBL" id="AK027488">
    <property type="protein sequence ID" value="BAB55148.1"/>
    <property type="status" value="ALT_INIT"/>
    <property type="molecule type" value="mRNA"/>
</dbReference>
<dbReference type="EMBL" id="AK290332">
    <property type="protein sequence ID" value="BAF83021.1"/>
    <property type="molecule type" value="mRNA"/>
</dbReference>
<dbReference type="EMBL" id="AL049924">
    <property type="protein sequence ID" value="CAB43208.1"/>
    <property type="molecule type" value="mRNA"/>
</dbReference>
<dbReference type="EMBL" id="AL713760">
    <property type="protein sequence ID" value="CAD28530.1"/>
    <property type="molecule type" value="mRNA"/>
</dbReference>
<dbReference type="EMBL" id="AC133550">
    <property type="status" value="NOT_ANNOTATED_CDS"/>
    <property type="molecule type" value="Genomic_DNA"/>
</dbReference>
<dbReference type="EMBL" id="BC010704">
    <property type="protein sequence ID" value="AAH10704.1"/>
    <property type="status" value="ALT_INIT"/>
    <property type="molecule type" value="mRNA"/>
</dbReference>
<dbReference type="CCDS" id="CCDS32424.1">
    <molecule id="Q9NRF2-2"/>
</dbReference>
<dbReference type="CCDS" id="CCDS53996.1">
    <molecule id="Q9NRF2-1"/>
</dbReference>
<dbReference type="CCDS" id="CCDS53997.1">
    <molecule id="Q9NRF2-3"/>
</dbReference>
<dbReference type="PIR" id="T08662">
    <property type="entry name" value="T08662"/>
</dbReference>
<dbReference type="RefSeq" id="NP_001139267.1">
    <molecule id="Q9NRF2-1"/>
    <property type="nucleotide sequence ID" value="NM_001145795.2"/>
</dbReference>
<dbReference type="RefSeq" id="NP_001139268.1">
    <molecule id="Q9NRF2-2"/>
    <property type="nucleotide sequence ID" value="NM_001145796.2"/>
</dbReference>
<dbReference type="RefSeq" id="NP_001139269.1">
    <molecule id="Q9NRF2-3"/>
    <property type="nucleotide sequence ID" value="NM_001145797.2"/>
</dbReference>
<dbReference type="RefSeq" id="NP_001139284.1">
    <molecule id="Q9NRF2-2"/>
    <property type="nucleotide sequence ID" value="NM_001145812.2"/>
</dbReference>
<dbReference type="RefSeq" id="NP_001295222.1">
    <molecule id="Q9NRF2-1"/>
    <property type="nucleotide sequence ID" value="NM_001308293.2"/>
</dbReference>
<dbReference type="RefSeq" id="NP_001295223.1">
    <property type="nucleotide sequence ID" value="NM_001308294.1"/>
</dbReference>
<dbReference type="RefSeq" id="NP_001374333.1">
    <molecule id="Q9NRF2-1"/>
    <property type="nucleotide sequence ID" value="NM_001387404.1"/>
</dbReference>
<dbReference type="RefSeq" id="NP_001374359.1">
    <molecule id="Q9NRF2-1"/>
    <property type="nucleotide sequence ID" value="NM_001387430.1"/>
</dbReference>
<dbReference type="RefSeq" id="NP_056318.2">
    <molecule id="Q9NRF2-2"/>
    <property type="nucleotide sequence ID" value="NM_015503.3"/>
</dbReference>
<dbReference type="RefSeq" id="XP_016878603.1">
    <property type="nucleotide sequence ID" value="XM_017023114.1"/>
</dbReference>
<dbReference type="RefSeq" id="XP_016878604.1">
    <property type="nucleotide sequence ID" value="XM_017023115.1"/>
</dbReference>
<dbReference type="RefSeq" id="XP_016878605.1">
    <property type="nucleotide sequence ID" value="XM_017023116.1"/>
</dbReference>
<dbReference type="PDB" id="5W3R">
    <property type="method" value="X-ray"/>
    <property type="resolution" value="1.39 A"/>
    <property type="chains" value="A=519-628"/>
</dbReference>
<dbReference type="PDBsum" id="5W3R"/>
<dbReference type="SMR" id="Q9NRF2"/>
<dbReference type="BioGRID" id="117455">
    <property type="interactions" value="31"/>
</dbReference>
<dbReference type="FunCoup" id="Q9NRF2">
    <property type="interactions" value="1416"/>
</dbReference>
<dbReference type="IntAct" id="Q9NRF2">
    <property type="interactions" value="24"/>
</dbReference>
<dbReference type="MINT" id="Q9NRF2"/>
<dbReference type="STRING" id="9606.ENSP00000321221"/>
<dbReference type="GlyGen" id="Q9NRF2">
    <property type="glycosylation" value="1 site, 1 O-linked glycan (1 site)"/>
</dbReference>
<dbReference type="iPTMnet" id="Q9NRF2"/>
<dbReference type="PhosphoSitePlus" id="Q9NRF2"/>
<dbReference type="BioMuta" id="SH2B1"/>
<dbReference type="DMDM" id="313104186"/>
<dbReference type="jPOST" id="Q9NRF2"/>
<dbReference type="MassIVE" id="Q9NRF2"/>
<dbReference type="PaxDb" id="9606-ENSP00000321221"/>
<dbReference type="PeptideAtlas" id="Q9NRF2"/>
<dbReference type="ProteomicsDB" id="82346">
    <molecule id="Q9NRF2-1"/>
</dbReference>
<dbReference type="ProteomicsDB" id="82347">
    <molecule id="Q9NRF2-2"/>
</dbReference>
<dbReference type="ProteomicsDB" id="82348">
    <molecule id="Q9NRF2-3"/>
</dbReference>
<dbReference type="Pumba" id="Q9NRF2"/>
<dbReference type="Antibodypedia" id="26583">
    <property type="antibodies" value="284 antibodies from 31 providers"/>
</dbReference>
<dbReference type="DNASU" id="25970"/>
<dbReference type="Ensembl" id="ENST00000322610.12">
    <molecule id="Q9NRF2-1"/>
    <property type="protein sequence ID" value="ENSP00000321221.7"/>
    <property type="gene ID" value="ENSG00000178188.16"/>
</dbReference>
<dbReference type="Ensembl" id="ENST00000337120.9">
    <molecule id="Q9NRF2-2"/>
    <property type="protein sequence ID" value="ENSP00000337163.5"/>
    <property type="gene ID" value="ENSG00000178188.16"/>
</dbReference>
<dbReference type="Ensembl" id="ENST00000359285.10">
    <molecule id="Q9NRF2-3"/>
    <property type="protein sequence ID" value="ENSP00000352232.5"/>
    <property type="gene ID" value="ENSG00000178188.16"/>
</dbReference>
<dbReference type="Ensembl" id="ENST00000395532.8">
    <molecule id="Q9NRF2-2"/>
    <property type="protein sequence ID" value="ENSP00000378903.4"/>
    <property type="gene ID" value="ENSG00000178188.16"/>
</dbReference>
<dbReference type="Ensembl" id="ENST00000618521.4">
    <molecule id="Q9NRF2-1"/>
    <property type="protein sequence ID" value="ENSP00000481709.1"/>
    <property type="gene ID" value="ENSG00000178188.16"/>
</dbReference>
<dbReference type="Ensembl" id="ENST00000684370.1">
    <molecule id="Q9NRF2-1"/>
    <property type="protein sequence ID" value="ENSP00000507475.1"/>
    <property type="gene ID" value="ENSG00000178188.16"/>
</dbReference>
<dbReference type="Ensembl" id="ENST00000707128.1">
    <molecule id="Q9NRF2-2"/>
    <property type="protein sequence ID" value="ENSP00000516756.1"/>
    <property type="gene ID" value="ENSG00000178188.16"/>
</dbReference>
<dbReference type="GeneID" id="25970"/>
<dbReference type="KEGG" id="hsa:25970"/>
<dbReference type="MANE-Select" id="ENST00000684370.1">
    <property type="protein sequence ID" value="ENSP00000507475.1"/>
    <property type="RefSeq nucleotide sequence ID" value="NM_001387430.1"/>
    <property type="RefSeq protein sequence ID" value="NP_001374359.1"/>
</dbReference>
<dbReference type="UCSC" id="uc002dri.4">
    <molecule id="Q9NRF2-1"/>
    <property type="organism name" value="human"/>
</dbReference>
<dbReference type="AGR" id="HGNC:30417"/>
<dbReference type="CTD" id="25970"/>
<dbReference type="DisGeNET" id="25970"/>
<dbReference type="GeneCards" id="SH2B1"/>
<dbReference type="HGNC" id="HGNC:30417">
    <property type="gene designation" value="SH2B1"/>
</dbReference>
<dbReference type="HPA" id="ENSG00000178188">
    <property type="expression patterns" value="Low tissue specificity"/>
</dbReference>
<dbReference type="MalaCards" id="SH2B1"/>
<dbReference type="MIM" id="608937">
    <property type="type" value="gene"/>
</dbReference>
<dbReference type="neXtProt" id="NX_Q9NRF2"/>
<dbReference type="OpenTargets" id="ENSG00000178188"/>
<dbReference type="Orphanet" id="261222">
    <property type="disease" value="Distal 16p11.2 microdeletion syndrome"/>
</dbReference>
<dbReference type="Orphanet" id="261197">
    <property type="disease" value="Proximal 16p11.2 microdeletion syndrome"/>
</dbReference>
<dbReference type="Orphanet" id="329249">
    <property type="disease" value="Severe early-onset obesity-insulin resistance syndrome due to SH2B1 deficiency"/>
</dbReference>
<dbReference type="PharmGKB" id="PA145148084"/>
<dbReference type="VEuPathDB" id="HostDB:ENSG00000178188"/>
<dbReference type="eggNOG" id="ENOG502QT43">
    <property type="taxonomic scope" value="Eukaryota"/>
</dbReference>
<dbReference type="GeneTree" id="ENSGT00950000183191"/>
<dbReference type="HOGENOM" id="CLU_014885_4_0_1"/>
<dbReference type="InParanoid" id="Q9NRF2"/>
<dbReference type="OMA" id="AFSHRFV"/>
<dbReference type="OrthoDB" id="10047184at2759"/>
<dbReference type="PAN-GO" id="Q9NRF2">
    <property type="GO annotations" value="3 GO annotations based on evolutionary models"/>
</dbReference>
<dbReference type="PhylomeDB" id="Q9NRF2"/>
<dbReference type="TreeFam" id="TF323184"/>
<dbReference type="PathwayCommons" id="Q9NRF2"/>
<dbReference type="Reactome" id="R-HSA-1170546">
    <molecule id="Q9NRF2-2"/>
    <property type="pathway name" value="Prolactin receptor signaling"/>
</dbReference>
<dbReference type="Reactome" id="R-HSA-2586552">
    <molecule id="Q9NRF2-2"/>
    <property type="pathway name" value="Signaling by Leptin"/>
</dbReference>
<dbReference type="Reactome" id="R-HSA-982772">
    <molecule id="Q9NRF2-2"/>
    <property type="pathway name" value="Growth hormone receptor signaling"/>
</dbReference>
<dbReference type="Reactome" id="R-HSA-983231">
    <property type="pathway name" value="Factors involved in megakaryocyte development and platelet production"/>
</dbReference>
<dbReference type="SignaLink" id="Q9NRF2"/>
<dbReference type="SIGNOR" id="Q9NRF2"/>
<dbReference type="BioGRID-ORCS" id="25970">
    <property type="hits" value="44 hits in 1160 CRISPR screens"/>
</dbReference>
<dbReference type="CD-CODE" id="1A18FFC4">
    <property type="entry name" value="Paraspeckle"/>
</dbReference>
<dbReference type="ChiTaRS" id="SH2B1">
    <property type="organism name" value="human"/>
</dbReference>
<dbReference type="GeneWiki" id="SH2B1"/>
<dbReference type="GenomeRNAi" id="25970"/>
<dbReference type="Pharos" id="Q9NRF2">
    <property type="development level" value="Tbio"/>
</dbReference>
<dbReference type="PRO" id="PR:Q9NRF2"/>
<dbReference type="Proteomes" id="UP000005640">
    <property type="component" value="Chromosome 16"/>
</dbReference>
<dbReference type="RNAct" id="Q9NRF2">
    <property type="molecule type" value="protein"/>
</dbReference>
<dbReference type="Bgee" id="ENSG00000178188">
    <property type="expression patterns" value="Expressed in right hemisphere of cerebellum and 177 other cell types or tissues"/>
</dbReference>
<dbReference type="ExpressionAtlas" id="Q9NRF2">
    <property type="expression patterns" value="baseline and differential"/>
</dbReference>
<dbReference type="GO" id="GO:0005829">
    <property type="term" value="C:cytosol"/>
    <property type="evidence" value="ECO:0000304"/>
    <property type="project" value="Reactome"/>
</dbReference>
<dbReference type="GO" id="GO:0005634">
    <property type="term" value="C:nucleus"/>
    <property type="evidence" value="ECO:0007669"/>
    <property type="project" value="UniProtKB-SubCell"/>
</dbReference>
<dbReference type="GO" id="GO:0005886">
    <property type="term" value="C:plasma membrane"/>
    <property type="evidence" value="ECO:0000318"/>
    <property type="project" value="GO_Central"/>
</dbReference>
<dbReference type="GO" id="GO:0005068">
    <property type="term" value="F:transmembrane receptor protein tyrosine kinase adaptor activity"/>
    <property type="evidence" value="ECO:0000318"/>
    <property type="project" value="GO_Central"/>
</dbReference>
<dbReference type="GO" id="GO:0048870">
    <property type="term" value="P:cell motility"/>
    <property type="evidence" value="ECO:0007669"/>
    <property type="project" value="Ensembl"/>
</dbReference>
<dbReference type="GO" id="GO:0035556">
    <property type="term" value="P:intracellular signal transduction"/>
    <property type="evidence" value="ECO:0000318"/>
    <property type="project" value="GO_Central"/>
</dbReference>
<dbReference type="GO" id="GO:0030032">
    <property type="term" value="P:lamellipodium assembly"/>
    <property type="evidence" value="ECO:0007669"/>
    <property type="project" value="Ensembl"/>
</dbReference>
<dbReference type="GO" id="GO:0045840">
    <property type="term" value="P:positive regulation of mitotic nuclear division"/>
    <property type="evidence" value="ECO:0007669"/>
    <property type="project" value="Ensembl"/>
</dbReference>
<dbReference type="GO" id="GO:0060391">
    <property type="term" value="P:positive regulation of SMAD protein signal transduction"/>
    <property type="evidence" value="ECO:0000316"/>
    <property type="project" value="MGI"/>
</dbReference>
<dbReference type="GO" id="GO:2000278">
    <property type="term" value="P:regulation of DNA biosynthetic process"/>
    <property type="evidence" value="ECO:0007669"/>
    <property type="project" value="Ensembl"/>
</dbReference>
<dbReference type="CDD" id="cd01231">
    <property type="entry name" value="PH_SH2B_family"/>
    <property type="match status" value="1"/>
</dbReference>
<dbReference type="CDD" id="cd10346">
    <property type="entry name" value="SH2_SH2B_family"/>
    <property type="match status" value="1"/>
</dbReference>
<dbReference type="FunFam" id="3.30.505.10:FF:000008">
    <property type="entry name" value="SH2B adapter protein 1 isoform 2"/>
    <property type="match status" value="1"/>
</dbReference>
<dbReference type="FunFam" id="2.30.29.30:FF:000192">
    <property type="entry name" value="SH2B adapter protein 1 isoform X1"/>
    <property type="match status" value="1"/>
</dbReference>
<dbReference type="Gene3D" id="6.10.140.110">
    <property type="match status" value="1"/>
</dbReference>
<dbReference type="Gene3D" id="2.30.29.30">
    <property type="entry name" value="Pleckstrin-homology domain (PH domain)/Phosphotyrosine-binding domain (PTB)"/>
    <property type="match status" value="1"/>
</dbReference>
<dbReference type="Gene3D" id="3.30.505.10">
    <property type="entry name" value="SH2 domain"/>
    <property type="match status" value="1"/>
</dbReference>
<dbReference type="InterPro" id="IPR011993">
    <property type="entry name" value="PH-like_dom_sf"/>
</dbReference>
<dbReference type="InterPro" id="IPR001849">
    <property type="entry name" value="PH_domain"/>
</dbReference>
<dbReference type="InterPro" id="IPR015012">
    <property type="entry name" value="Phe_ZIP"/>
</dbReference>
<dbReference type="InterPro" id="IPR036290">
    <property type="entry name" value="Phe_ZIP_sf"/>
</dbReference>
<dbReference type="InterPro" id="IPR000980">
    <property type="entry name" value="SH2"/>
</dbReference>
<dbReference type="InterPro" id="IPR036860">
    <property type="entry name" value="SH2_dom_sf"/>
</dbReference>
<dbReference type="InterPro" id="IPR030523">
    <property type="entry name" value="SH2B"/>
</dbReference>
<dbReference type="InterPro" id="IPR035057">
    <property type="entry name" value="SH2B1_SH2"/>
</dbReference>
<dbReference type="PANTHER" id="PTHR10872">
    <property type="entry name" value="SH2B ADAPTER PROTEIN"/>
    <property type="match status" value="1"/>
</dbReference>
<dbReference type="PANTHER" id="PTHR10872:SF3">
    <property type="entry name" value="SH2B ADAPTER PROTEIN 1"/>
    <property type="match status" value="1"/>
</dbReference>
<dbReference type="Pfam" id="PF00169">
    <property type="entry name" value="PH"/>
    <property type="match status" value="1"/>
</dbReference>
<dbReference type="Pfam" id="PF08916">
    <property type="entry name" value="Phe_ZIP"/>
    <property type="match status" value="1"/>
</dbReference>
<dbReference type="Pfam" id="PF00017">
    <property type="entry name" value="SH2"/>
    <property type="match status" value="1"/>
</dbReference>
<dbReference type="PRINTS" id="PR00401">
    <property type="entry name" value="SH2DOMAIN"/>
</dbReference>
<dbReference type="SMART" id="SM00233">
    <property type="entry name" value="PH"/>
    <property type="match status" value="1"/>
</dbReference>
<dbReference type="SMART" id="SM00252">
    <property type="entry name" value="SH2"/>
    <property type="match status" value="1"/>
</dbReference>
<dbReference type="SUPFAM" id="SSF50729">
    <property type="entry name" value="PH domain-like"/>
    <property type="match status" value="1"/>
</dbReference>
<dbReference type="SUPFAM" id="SSF109805">
    <property type="entry name" value="Phenylalanine zipper"/>
    <property type="match status" value="1"/>
</dbReference>
<dbReference type="SUPFAM" id="SSF55550">
    <property type="entry name" value="SH2 domain"/>
    <property type="match status" value="1"/>
</dbReference>
<dbReference type="PROSITE" id="PS50001">
    <property type="entry name" value="SH2"/>
    <property type="match status" value="1"/>
</dbReference>
<proteinExistence type="evidence at protein level"/>
<evidence type="ECO:0000250" key="1"/>
<evidence type="ECO:0000250" key="2">
    <source>
        <dbReference type="UniProtKB" id="Q62985"/>
    </source>
</evidence>
<evidence type="ECO:0000250" key="3">
    <source>
        <dbReference type="UniProtKB" id="Q91ZM2"/>
    </source>
</evidence>
<evidence type="ECO:0000255" key="4">
    <source>
        <dbReference type="PROSITE-ProRule" id="PRU00191"/>
    </source>
</evidence>
<evidence type="ECO:0000256" key="5">
    <source>
        <dbReference type="SAM" id="MobiDB-lite"/>
    </source>
</evidence>
<evidence type="ECO:0000269" key="6">
    <source>
    </source>
</evidence>
<evidence type="ECO:0000269" key="7">
    <source>
    </source>
</evidence>
<evidence type="ECO:0000269" key="8">
    <source>
    </source>
</evidence>
<evidence type="ECO:0000269" key="9">
    <source>
    </source>
</evidence>
<evidence type="ECO:0000269" key="10">
    <source>
    </source>
</evidence>
<evidence type="ECO:0000269" key="11">
    <source>
    </source>
</evidence>
<evidence type="ECO:0000269" key="12">
    <source>
    </source>
</evidence>
<evidence type="ECO:0000269" key="13">
    <source>
    </source>
</evidence>
<evidence type="ECO:0000269" key="14">
    <source>
    </source>
</evidence>
<evidence type="ECO:0000269" key="15">
    <source>
    </source>
</evidence>
<evidence type="ECO:0000303" key="16">
    <source>
    </source>
</evidence>
<evidence type="ECO:0000303" key="17">
    <source>
    </source>
</evidence>
<evidence type="ECO:0000303" key="18">
    <source>
    </source>
</evidence>
<evidence type="ECO:0000303" key="19">
    <source>
    </source>
</evidence>
<evidence type="ECO:0000303" key="20">
    <source>
    </source>
</evidence>
<evidence type="ECO:0000305" key="21"/>
<evidence type="ECO:0007744" key="22">
    <source>
    </source>
</evidence>
<evidence type="ECO:0007744" key="23">
    <source>
    </source>
</evidence>
<evidence type="ECO:0007744" key="24">
    <source>
    </source>
</evidence>
<evidence type="ECO:0007829" key="25">
    <source>
        <dbReference type="PDB" id="5W3R"/>
    </source>
</evidence>
<protein>
    <recommendedName>
        <fullName>SH2B adapter protein 1</fullName>
    </recommendedName>
    <alternativeName>
        <fullName>Pro-rich, PH and SH2 domain-containing signaling mediator</fullName>
        <shortName>PSM</shortName>
    </alternativeName>
    <alternativeName>
        <fullName>SH2 domain-containing protein 1B</fullName>
    </alternativeName>
</protein>
<reference key="1">
    <citation type="journal article" date="2005" name="Mol. Cell. Biol.">
        <title>Kinase activation through dimerization by human SH2-B.</title>
        <authorList>
            <person name="Nishi M."/>
            <person name="Werner E.D."/>
            <person name="Oh B.C."/>
            <person name="Frantz J.D."/>
            <person name="Dhe-Paganon S."/>
            <person name="Hansen L."/>
            <person name="Lee J."/>
            <person name="Shoelson S.E."/>
        </authorList>
    </citation>
    <scope>NUCLEOTIDE SEQUENCE [MRNA] (ISOFORMS 1; 2 AND 3)</scope>
    <scope>FUNCTION IN JAK2 ACTIVATION</scope>
    <scope>SELF-ASSOCIATION</scope>
    <scope>INTERACTION WITH JAK2; SH2B2; INSR AND IGF1R</scope>
    <scope>PHOSPHORYLATION</scope>
    <scope>TISSUE SPECIFICITY</scope>
    <scope>MUTAGENESIS OF PHE-29; ALA-34; ALA-38; PHE-41; ALA-42; TYR-48; PHE-68; PHE-72 AND ARG-555</scope>
    <scope>VARIANT ALA-484</scope>
</reference>
<reference key="2">
    <citation type="journal article" date="2000" name="DNA Res.">
        <title>Prediction of the coding sequences of unidentified human genes. XVI. The complete sequences of 150 new cDNA clones from brain which code for large proteins in vitro.</title>
        <authorList>
            <person name="Nagase T."/>
            <person name="Kikuno R."/>
            <person name="Ishikawa K."/>
            <person name="Hirosawa M."/>
            <person name="Ohara O."/>
        </authorList>
    </citation>
    <scope>NUCLEOTIDE SEQUENCE [LARGE SCALE MRNA] (ISOFORM 2)</scope>
    <scope>VARIANT ALA-541</scope>
    <source>
        <tissue>Brain</tissue>
    </source>
</reference>
<reference key="3">
    <citation type="journal article" date="2004" name="Nat. Genet.">
        <title>Complete sequencing and characterization of 21,243 full-length human cDNAs.</title>
        <authorList>
            <person name="Ota T."/>
            <person name="Suzuki Y."/>
            <person name="Nishikawa T."/>
            <person name="Otsuki T."/>
            <person name="Sugiyama T."/>
            <person name="Irie R."/>
            <person name="Wakamatsu A."/>
            <person name="Hayashi K."/>
            <person name="Sato H."/>
            <person name="Nagai K."/>
            <person name="Kimura K."/>
            <person name="Makita H."/>
            <person name="Sekine M."/>
            <person name="Obayashi M."/>
            <person name="Nishi T."/>
            <person name="Shibahara T."/>
            <person name="Tanaka T."/>
            <person name="Ishii S."/>
            <person name="Yamamoto J."/>
            <person name="Saito K."/>
            <person name="Kawai Y."/>
            <person name="Isono Y."/>
            <person name="Nakamura Y."/>
            <person name="Nagahari K."/>
            <person name="Murakami K."/>
            <person name="Yasuda T."/>
            <person name="Iwayanagi T."/>
            <person name="Wagatsuma M."/>
            <person name="Shiratori A."/>
            <person name="Sudo H."/>
            <person name="Hosoiri T."/>
            <person name="Kaku Y."/>
            <person name="Kodaira H."/>
            <person name="Kondo H."/>
            <person name="Sugawara M."/>
            <person name="Takahashi M."/>
            <person name="Kanda K."/>
            <person name="Yokoi T."/>
            <person name="Furuya T."/>
            <person name="Kikkawa E."/>
            <person name="Omura Y."/>
            <person name="Abe K."/>
            <person name="Kamihara K."/>
            <person name="Katsuta N."/>
            <person name="Sato K."/>
            <person name="Tanikawa M."/>
            <person name="Yamazaki M."/>
            <person name="Ninomiya K."/>
            <person name="Ishibashi T."/>
            <person name="Yamashita H."/>
            <person name="Murakawa K."/>
            <person name="Fujimori K."/>
            <person name="Tanai H."/>
            <person name="Kimata M."/>
            <person name="Watanabe M."/>
            <person name="Hiraoka S."/>
            <person name="Chiba Y."/>
            <person name="Ishida S."/>
            <person name="Ono Y."/>
            <person name="Takiguchi S."/>
            <person name="Watanabe S."/>
            <person name="Yosida M."/>
            <person name="Hotuta T."/>
            <person name="Kusano J."/>
            <person name="Kanehori K."/>
            <person name="Takahashi-Fujii A."/>
            <person name="Hara H."/>
            <person name="Tanase T.-O."/>
            <person name="Nomura Y."/>
            <person name="Togiya S."/>
            <person name="Komai F."/>
            <person name="Hara R."/>
            <person name="Takeuchi K."/>
            <person name="Arita M."/>
            <person name="Imose N."/>
            <person name="Musashino K."/>
            <person name="Yuuki H."/>
            <person name="Oshima A."/>
            <person name="Sasaki N."/>
            <person name="Aotsuka S."/>
            <person name="Yoshikawa Y."/>
            <person name="Matsunawa H."/>
            <person name="Ichihara T."/>
            <person name="Shiohata N."/>
            <person name="Sano S."/>
            <person name="Moriya S."/>
            <person name="Momiyama H."/>
            <person name="Satoh N."/>
            <person name="Takami S."/>
            <person name="Terashima Y."/>
            <person name="Suzuki O."/>
            <person name="Nakagawa S."/>
            <person name="Senoh A."/>
            <person name="Mizoguchi H."/>
            <person name="Goto Y."/>
            <person name="Shimizu F."/>
            <person name="Wakebe H."/>
            <person name="Hishigaki H."/>
            <person name="Watanabe T."/>
            <person name="Sugiyama A."/>
            <person name="Takemoto M."/>
            <person name="Kawakami B."/>
            <person name="Yamazaki M."/>
            <person name="Watanabe K."/>
            <person name="Kumagai A."/>
            <person name="Itakura S."/>
            <person name="Fukuzumi Y."/>
            <person name="Fujimori Y."/>
            <person name="Komiyama M."/>
            <person name="Tashiro H."/>
            <person name="Tanigami A."/>
            <person name="Fujiwara T."/>
            <person name="Ono T."/>
            <person name="Yamada K."/>
            <person name="Fujii Y."/>
            <person name="Ozaki K."/>
            <person name="Hirao M."/>
            <person name="Ohmori Y."/>
            <person name="Kawabata A."/>
            <person name="Hikiji T."/>
            <person name="Kobatake N."/>
            <person name="Inagaki H."/>
            <person name="Ikema Y."/>
            <person name="Okamoto S."/>
            <person name="Okitani R."/>
            <person name="Kawakami T."/>
            <person name="Noguchi S."/>
            <person name="Itoh T."/>
            <person name="Shigeta K."/>
            <person name="Senba T."/>
            <person name="Matsumura K."/>
            <person name="Nakajima Y."/>
            <person name="Mizuno T."/>
            <person name="Morinaga M."/>
            <person name="Sasaki M."/>
            <person name="Togashi T."/>
            <person name="Oyama M."/>
            <person name="Hata H."/>
            <person name="Watanabe M."/>
            <person name="Komatsu T."/>
            <person name="Mizushima-Sugano J."/>
            <person name="Satoh T."/>
            <person name="Shirai Y."/>
            <person name="Takahashi Y."/>
            <person name="Nakagawa K."/>
            <person name="Okumura K."/>
            <person name="Nagase T."/>
            <person name="Nomura N."/>
            <person name="Kikuchi H."/>
            <person name="Masuho Y."/>
            <person name="Yamashita R."/>
            <person name="Nakai K."/>
            <person name="Yada T."/>
            <person name="Nakamura Y."/>
            <person name="Ohara O."/>
            <person name="Isogai T."/>
            <person name="Sugano S."/>
        </authorList>
    </citation>
    <scope>NUCLEOTIDE SEQUENCE [LARGE SCALE MRNA] (ISOFORM 2)</scope>
    <source>
        <tissue>Teratocarcinoma</tissue>
        <tissue>Tongue</tissue>
    </source>
</reference>
<reference key="4">
    <citation type="journal article" date="2007" name="BMC Genomics">
        <title>The full-ORF clone resource of the German cDNA consortium.</title>
        <authorList>
            <person name="Bechtel S."/>
            <person name="Rosenfelder H."/>
            <person name="Duda A."/>
            <person name="Schmidt C.P."/>
            <person name="Ernst U."/>
            <person name="Wellenreuther R."/>
            <person name="Mehrle A."/>
            <person name="Schuster C."/>
            <person name="Bahr A."/>
            <person name="Bloecker H."/>
            <person name="Heubner D."/>
            <person name="Hoerlein A."/>
            <person name="Michel G."/>
            <person name="Wedler H."/>
            <person name="Koehrer K."/>
            <person name="Ottenwaelder B."/>
            <person name="Poustka A."/>
            <person name="Wiemann S."/>
            <person name="Schupp I."/>
        </authorList>
    </citation>
    <scope>NUCLEOTIDE SEQUENCE [LARGE SCALE MRNA] (ISOFORM 2)</scope>
    <scope>NUCLEOTIDE SEQUENCE [LARGE SCALE MRNA] OF 144-756 (ISOFORM 3)</scope>
    <scope>VARIANT ALA-484</scope>
    <source>
        <tissue>Mammary cancer</tissue>
    </source>
</reference>
<reference key="5">
    <citation type="journal article" date="2004" name="Nature">
        <title>The sequence and analysis of duplication-rich human chromosome 16.</title>
        <authorList>
            <person name="Martin J."/>
            <person name="Han C."/>
            <person name="Gordon L.A."/>
            <person name="Terry A."/>
            <person name="Prabhakar S."/>
            <person name="She X."/>
            <person name="Xie G."/>
            <person name="Hellsten U."/>
            <person name="Chan Y.M."/>
            <person name="Altherr M."/>
            <person name="Couronne O."/>
            <person name="Aerts A."/>
            <person name="Bajorek E."/>
            <person name="Black S."/>
            <person name="Blumer H."/>
            <person name="Branscomb E."/>
            <person name="Brown N.C."/>
            <person name="Bruno W.J."/>
            <person name="Buckingham J.M."/>
            <person name="Callen D.F."/>
            <person name="Campbell C.S."/>
            <person name="Campbell M.L."/>
            <person name="Campbell E.W."/>
            <person name="Caoile C."/>
            <person name="Challacombe J.F."/>
            <person name="Chasteen L.A."/>
            <person name="Chertkov O."/>
            <person name="Chi H.C."/>
            <person name="Christensen M."/>
            <person name="Clark L.M."/>
            <person name="Cohn J.D."/>
            <person name="Denys M."/>
            <person name="Detter J.C."/>
            <person name="Dickson M."/>
            <person name="Dimitrijevic-Bussod M."/>
            <person name="Escobar J."/>
            <person name="Fawcett J.J."/>
            <person name="Flowers D."/>
            <person name="Fotopulos D."/>
            <person name="Glavina T."/>
            <person name="Gomez M."/>
            <person name="Gonzales E."/>
            <person name="Goodstein D."/>
            <person name="Goodwin L.A."/>
            <person name="Grady D.L."/>
            <person name="Grigoriev I."/>
            <person name="Groza M."/>
            <person name="Hammon N."/>
            <person name="Hawkins T."/>
            <person name="Haydu L."/>
            <person name="Hildebrand C.E."/>
            <person name="Huang W."/>
            <person name="Israni S."/>
            <person name="Jett J."/>
            <person name="Jewett P.B."/>
            <person name="Kadner K."/>
            <person name="Kimball H."/>
            <person name="Kobayashi A."/>
            <person name="Krawczyk M.-C."/>
            <person name="Leyba T."/>
            <person name="Longmire J.L."/>
            <person name="Lopez F."/>
            <person name="Lou Y."/>
            <person name="Lowry S."/>
            <person name="Ludeman T."/>
            <person name="Manohar C.F."/>
            <person name="Mark G.A."/>
            <person name="McMurray K.L."/>
            <person name="Meincke L.J."/>
            <person name="Morgan J."/>
            <person name="Moyzis R.K."/>
            <person name="Mundt M.O."/>
            <person name="Munk A.C."/>
            <person name="Nandkeshwar R.D."/>
            <person name="Pitluck S."/>
            <person name="Pollard M."/>
            <person name="Predki P."/>
            <person name="Parson-Quintana B."/>
            <person name="Ramirez L."/>
            <person name="Rash S."/>
            <person name="Retterer J."/>
            <person name="Ricke D.O."/>
            <person name="Robinson D.L."/>
            <person name="Rodriguez A."/>
            <person name="Salamov A."/>
            <person name="Saunders E.H."/>
            <person name="Scott D."/>
            <person name="Shough T."/>
            <person name="Stallings R.L."/>
            <person name="Stalvey M."/>
            <person name="Sutherland R.D."/>
            <person name="Tapia R."/>
            <person name="Tesmer J.G."/>
            <person name="Thayer N."/>
            <person name="Thompson L.S."/>
            <person name="Tice H."/>
            <person name="Torney D.C."/>
            <person name="Tran-Gyamfi M."/>
            <person name="Tsai M."/>
            <person name="Ulanovsky L.E."/>
            <person name="Ustaszewska A."/>
            <person name="Vo N."/>
            <person name="White P.S."/>
            <person name="Williams A.L."/>
            <person name="Wills P.L."/>
            <person name="Wu J.-R."/>
            <person name="Wu K."/>
            <person name="Yang J."/>
            <person name="DeJong P."/>
            <person name="Bruce D."/>
            <person name="Doggett N.A."/>
            <person name="Deaven L."/>
            <person name="Schmutz J."/>
            <person name="Grimwood J."/>
            <person name="Richardson P."/>
            <person name="Rokhsar D.S."/>
            <person name="Eichler E.E."/>
            <person name="Gilna P."/>
            <person name="Lucas S.M."/>
            <person name="Myers R.M."/>
            <person name="Rubin E.M."/>
            <person name="Pennacchio L.A."/>
        </authorList>
    </citation>
    <scope>NUCLEOTIDE SEQUENCE [LARGE SCALE GENOMIC DNA]</scope>
</reference>
<reference key="6">
    <citation type="journal article" date="2004" name="Genome Res.">
        <title>The status, quality, and expansion of the NIH full-length cDNA project: the Mammalian Gene Collection (MGC).</title>
        <authorList>
            <consortium name="The MGC Project Team"/>
        </authorList>
    </citation>
    <scope>NUCLEOTIDE SEQUENCE [LARGE SCALE MRNA] OF 60-756 (ISOFORM 2)</scope>
    <source>
        <tissue>Eye</tissue>
    </source>
</reference>
<reference key="7">
    <citation type="journal article" date="1997" name="J. Biochem.">
        <title>PSM, an insulin-dependent, pro-rich, PH, SH2 domain containing partner of the insulin receptor.</title>
        <authorList>
            <person name="Riedel H."/>
            <person name="Wang J."/>
            <person name="Hansen H."/>
            <person name="Yousaf N."/>
        </authorList>
    </citation>
    <scope>INTERACTION WITH INSR</scope>
</reference>
<reference key="8">
    <citation type="journal article" date="1998" name="Biochem. J.">
        <title>SH2-Balpha is an insulin-receptor adapter protein and substrate that interacts with the activation loop of the insulin-receptor kinase.</title>
        <authorList>
            <person name="Kotani K."/>
            <person name="Wilden P."/>
            <person name="Pillay T.S."/>
        </authorList>
    </citation>
    <scope>FUNCTION</scope>
    <scope>INTERACTION WITH INSR</scope>
    <scope>PHOSPHORYLATION</scope>
</reference>
<reference key="9">
    <citation type="journal article" date="1998" name="J. Biol. Chem.">
        <title>Platelet-derived growth factor (PDGF) stimulates the association of SH2-Bbeta with PDGF receptor and phosphorylation of SH2-Bbeta.</title>
        <authorList>
            <person name="Rui L."/>
            <person name="Carter-Su C."/>
        </authorList>
    </citation>
    <scope>FUNCTION IN PDGF SIGNALING</scope>
    <scope>INTERACTION WITH PDGFRA/B</scope>
</reference>
<reference key="10">
    <citation type="journal article" date="1999" name="Mamm. Genome">
        <title>Alternative splicing, gene localization, and binding of SH2-B to the insulin receptor kinase domain.</title>
        <authorList>
            <person name="Nelms K."/>
            <person name="O'Neill T.J."/>
            <person name="Li S."/>
            <person name="Hubbard S.R."/>
            <person name="Gustafson T.A."/>
            <person name="Paul W.E."/>
        </authorList>
    </citation>
    <scope>INTERACTION WITH INSR AND IRS1</scope>
</reference>
<reference key="11">
    <citation type="journal article" date="2002" name="J. Biol. Chem.">
        <title>SH2-B family members differentially regulate JAK family tyrosine kinases.</title>
        <authorList>
            <person name="O'Brien K.B."/>
            <person name="O'Shea J.J."/>
            <person name="Carter-Su C."/>
        </authorList>
    </citation>
    <scope>INTERACTION WITH JAK1; JAK2 AND JAK3</scope>
    <scope>PHOSPHORYLATION</scope>
</reference>
<reference key="12">
    <citation type="journal article" date="2002" name="J. Biol. Chem.">
        <title>Interaction of fibroblast growth factor receptor 3 and the adapter protein SH2-B. A role in STAT5 activation.</title>
        <authorList>
            <person name="Kong M."/>
            <person name="Wang C.S."/>
            <person name="Donoghue D.J."/>
        </authorList>
    </citation>
    <scope>FUNCTION IN FGF SIGNALING</scope>
    <scope>INTERACTION WITH FGFR3</scope>
</reference>
<reference key="13">
    <citation type="journal article" date="2004" name="J. Biol. Chem.">
        <title>SH2-B is a positive regulator of nerve growth factor-mediated activation of the Akt/Forkhead pathway in PC12 cells.</title>
        <authorList>
            <person name="Wang X."/>
            <person name="Chen L."/>
            <person name="Maures T.J."/>
            <person name="Herrington J."/>
            <person name="Carter-Su C."/>
        </authorList>
    </citation>
    <scope>FUNCTION IN NGF SIGNALING</scope>
</reference>
<reference key="14">
    <citation type="journal article" date="2006" name="J. Cell Sci.">
        <title>Interaction of SH2-Bbeta with RET is involved in signaling of GDNF-induced neurite outgrowth.</title>
        <authorList>
            <person name="Zhang Y."/>
            <person name="Zhu W."/>
            <person name="Wang Y.G."/>
            <person name="Liu X.J."/>
            <person name="Jiao L."/>
            <person name="Liu X."/>
            <person name="Zhang Z.H."/>
            <person name="Lu C.L."/>
            <person name="He C."/>
        </authorList>
    </citation>
    <scope>FUNCTION IN GDNF SIGNALING</scope>
    <scope>INTERACTION WITH RET</scope>
</reference>
<reference key="15">
    <citation type="journal article" date="2007" name="Oncogene">
        <title>SH2B1beta adaptor is a key enhancer of RET tyrosine kinase signaling.</title>
        <authorList>
            <person name="Donatello S."/>
            <person name="Fiorino A."/>
            <person name="Degl'Innocenti D."/>
            <person name="Alberti L."/>
            <person name="Miranda C."/>
            <person name="Gorla L."/>
            <person name="Bongarzone I."/>
            <person name="Rizzetti M.G."/>
            <person name="Pierotti M.A."/>
            <person name="Borrello M.G."/>
        </authorList>
    </citation>
    <scope>FUNCTION IN RET SIGNALING</scope>
    <scope>INTERACTION WITH PRKAR1A/RET</scope>
</reference>
<reference key="16">
    <citation type="journal article" date="2008" name="J. Proteome Res.">
        <title>Combining protein-based IMAC, peptide-based IMAC, and MudPIT for efficient phosphoproteomic analysis.</title>
        <authorList>
            <person name="Cantin G.T."/>
            <person name="Yi W."/>
            <person name="Lu B."/>
            <person name="Park S.K."/>
            <person name="Xu T."/>
            <person name="Lee J.-D."/>
            <person name="Yates J.R. III"/>
        </authorList>
    </citation>
    <scope>PHOSPHORYLATION [LARGE SCALE ANALYSIS] AT SER-96</scope>
    <scope>IDENTIFICATION BY MASS SPECTROMETRY [LARGE SCALE ANALYSIS]</scope>
    <source>
        <tissue>Cervix carcinoma</tissue>
    </source>
</reference>
<reference key="17">
    <citation type="journal article" date="2008" name="Proc. Natl. Acad. Sci. U.S.A.">
        <title>A quantitative atlas of mitotic phosphorylation.</title>
        <authorList>
            <person name="Dephoure N."/>
            <person name="Zhou C."/>
            <person name="Villen J."/>
            <person name="Beausoleil S.A."/>
            <person name="Bakalarski C.E."/>
            <person name="Elledge S.J."/>
            <person name="Gygi S.P."/>
        </authorList>
    </citation>
    <scope>PHOSPHORYLATION [LARGE SCALE ANALYSIS] AT SER-96</scope>
    <scope>IDENTIFICATION BY MASS SPECTROMETRY [LARGE SCALE ANALYSIS]</scope>
    <source>
        <tissue>Cervix carcinoma</tissue>
    </source>
</reference>
<reference key="18">
    <citation type="journal article" date="2013" name="J. Proteome Res.">
        <title>Toward a comprehensive characterization of a human cancer cell phosphoproteome.</title>
        <authorList>
            <person name="Zhou H."/>
            <person name="Di Palma S."/>
            <person name="Preisinger C."/>
            <person name="Peng M."/>
            <person name="Polat A.N."/>
            <person name="Heck A.J."/>
            <person name="Mohammed S."/>
        </authorList>
    </citation>
    <scope>IDENTIFICATION BY MASS SPECTROMETRY [LARGE SCALE ANALYSIS]</scope>
    <source>
        <tissue>Cervix carcinoma</tissue>
        <tissue>Erythroleukemia</tissue>
    </source>
</reference>
<reference key="19">
    <citation type="journal article" date="2014" name="J. Proteomics">
        <title>An enzyme assisted RP-RPLC approach for in-depth analysis of human liver phosphoproteome.</title>
        <authorList>
            <person name="Bian Y."/>
            <person name="Song C."/>
            <person name="Cheng K."/>
            <person name="Dong M."/>
            <person name="Wang F."/>
            <person name="Huang J."/>
            <person name="Sun D."/>
            <person name="Wang L."/>
            <person name="Ye M."/>
            <person name="Zou H."/>
        </authorList>
    </citation>
    <scope>IDENTIFICATION BY MASS SPECTROMETRY [LARGE SCALE ANALYSIS]</scope>
    <source>
        <tissue>Liver</tissue>
    </source>
</reference>
<reference key="20">
    <citation type="journal article" date="2014" name="Mol. Cell. Proteomics">
        <title>Immunoaffinity enrichment and mass spectrometry analysis of protein methylation.</title>
        <authorList>
            <person name="Guo A."/>
            <person name="Gu H."/>
            <person name="Zhou J."/>
            <person name="Mulhern D."/>
            <person name="Wang Y."/>
            <person name="Lee K.A."/>
            <person name="Yang V."/>
            <person name="Aguiar M."/>
            <person name="Kornhauser J."/>
            <person name="Jia X."/>
            <person name="Ren J."/>
            <person name="Beausoleil S.A."/>
            <person name="Silva J.C."/>
            <person name="Vemulapalli V."/>
            <person name="Bedford M.T."/>
            <person name="Comb M.J."/>
        </authorList>
    </citation>
    <scope>METHYLATION [LARGE SCALE ANALYSIS] AT ARG-270</scope>
    <scope>IDENTIFICATION BY MASS SPECTROMETRY [LARGE SCALE ANALYSIS]</scope>
    <source>
        <tissue>Colon carcinoma</tissue>
    </source>
</reference>
<gene>
    <name type="primary">SH2B1</name>
    <name type="synonym">KIAA1299</name>
    <name type="synonym">SH2B</name>
</gene>
<accession>Q9NRF2</accession>
<accession>A8K2R7</accession>
<accession>Q96FK3</accession>
<accession>Q96SX3</accession>
<accession>Q9NRF1</accession>
<accession>Q9NRF3</accession>
<accession>Q9P2P7</accession>
<accession>Q9Y3Y3</accession>
<comment type="function">
    <text evidence="3 8 9 10 11 12 14 15">Adapter protein for several members of the tyrosine kinase receptor family. Involved in multiple signaling pathways mediated by Janus kinase (JAK) and receptor tyrosine kinases, including the receptors of insulin (INS), insulin-like growth factor 1 (IGF1), nerve growth factor (NGF), brain-derived neurotrophic factor (BDNF), glial cell line-derived neurotrophic factor (GDNF), platelet-derived growth factor (PDGF) and fibroblast growth factors (FGFs). In growth hormone (GH) signaling, autophosphorylated ('Tyr-813') JAK2 recruits SH2B1, which in turn is phosphorylated by JAK2 on tyrosine residues. These phosphotyrosines form potential binding sites for other signaling proteins. GH also promotes serine/threonine phosphorylation of SH2B1 and these phosphorylated residues may serve to recruit other proteins to the GHR-JAK2-SH2B1 complexes, such as RAC1. In leptin (LEP) signaling, binds to and potentiates the activation of JAK2 by globally enhancing downstream pathways. In response to leptin, binds simultaneously to both, JAK2 and IRS1 or IRS2, thus mediating formation of a complex of JAK2, SH2B1 and IRS1 or IRS2. Mediates tyrosine phosphorylation of IRS1 and IRS2, resulting in activation of the PI 3-kinase pathway. Acts as a positive regulator of NGF-mediated activation of the Akt/Forkhead pathway; prolongs NGF-induced phosphorylation of AKT1 on 'Ser-473' and AKT1 enzymatic activity. Enhances the kinase activity of the cytokine receptor-associated tyrosine kinase JAK2 and of other receptor tyrosine kinases, such as FGFR3 and NTRK1. For JAK2, the mechanism seems to involve dimerization of both, SH2B1 and JAK2. Enhances RET phosphorylation and kinase activity. Isoforms seem to be differentially involved in IGF1 and PDGF-induced mitogenesis (By similarity).</text>
</comment>
<comment type="subunit">
    <text evidence="3">Self-associates. Homopentamer (By similarity). Forms a heteromultimeric complex with SH2B2 (By similarity). Interacts with SH2B2. Isoform 1 interacts via its SH2 domain with JAK2. Isoform 2 interacts via its SH2 domain and its N-terminus with JAK2; the SH2 domain is required for the major interaction with JAK2 phosphorylated on tyrosine residues; the N-terminus provides a low-affinity binding to JAK2 independent of JAK2 phosphorylation. Isoform 3 interacts via its SH2 domain with JAK2. Isoform 1 interacts via its SH2 domain with INSR; the interaction requires receptor activation. Isoform 3 interacts via its SH2 domain with INSR; the interaction requires receptor activation and requires INSR phosphorylation at 'Tyr-1185'. Isoform 1 interacts with IGF1R; the interaction requires receptor activation. Isoform 2 interacts with PRKAR1A/RET (PTC2) fusion protein; the interaction requires RET 'Tyr-905' and Tyr-981'. Isoform 2 interacts via its SH2 domain with FGFR3; the interaction requires FGFR3 'Tyr-724' and 'Tyr-760'. Isoform 2 interacts with RET; the interaction requires RET kinase activity and RET 'Tyr-981'. Isoform 2 interacts with RAC1. Isoform 2 interacts with PDGFRA and/or PDGFRB; the interaction requires receptor activation. Interacts with IRS1 and IRS2. Isoform 3 is probably part of a complex consisting of INSR, IRS1 and SH2B1. Probably part of a ternary complex consisting of SH2B1, JAK2 and IRS1 or IRS2. May interact with FCER1G (By similarity). Interacts (via SH2 domain) with NTRK1 (phosphorylated) (By similarity). Interacts with IRS1 and IRS2 (By similarity).</text>
</comment>
<comment type="interaction">
    <interactant intactId="EBI-310491">
        <id>Q9NRF2</id>
    </interactant>
    <interactant intactId="EBI-297353">
        <id>P00533</id>
        <label>EGFR</label>
    </interactant>
    <organismsDiffer>false</organismsDiffer>
    <experiments>4</experiments>
</comment>
<comment type="interaction">
    <interactant intactId="EBI-310491">
        <id>Q9NRF2</id>
    </interactant>
    <interactant intactId="EBI-475899">
        <id>P06213</id>
        <label>INSR</label>
    </interactant>
    <organismsDiffer>false</organismsDiffer>
    <experiments>6</experiments>
</comment>
<comment type="interaction">
    <interactant intactId="EBI-310491">
        <id>Q9NRF2</id>
    </interactant>
    <interactant intactId="EBI-602878">
        <id>P42227</id>
        <label>Stat3</label>
    </interactant>
    <organismsDiffer>true</organismsDiffer>
    <experiments>5</experiments>
</comment>
<comment type="interaction">
    <interactant intactId="EBI-10691662">
        <id>Q9NRF2-2</id>
    </interactant>
    <interactant intactId="EBI-401755">
        <id>P62993</id>
        <label>GRB2</label>
    </interactant>
    <organismsDiffer>false</organismsDiffer>
    <experiments>3</experiments>
</comment>
<comment type="subcellular location">
    <subcellularLocation>
        <location evidence="1">Cytoplasm</location>
    </subcellularLocation>
    <subcellularLocation>
        <location evidence="21">Membrane</location>
    </subcellularLocation>
    <subcellularLocation>
        <location evidence="1">Nucleus</location>
    </subcellularLocation>
    <text evidence="1">Shuttles between the nucleus and the cytoplasm.</text>
</comment>
<comment type="alternative products">
    <event type="alternative splicing"/>
    <isoform>
        <id>Q9NRF2-1</id>
        <name>1</name>
        <name>Alpha</name>
        <sequence type="displayed"/>
    </isoform>
    <isoform>
        <id>Q9NRF2-2</id>
        <name>2</name>
        <name>Beta</name>
        <sequence type="described" ref="VSP_032027"/>
    </isoform>
    <isoform>
        <id>Q9NRF2-3</id>
        <name>3</name>
        <name>Gamma</name>
        <sequence type="described" ref="VSP_032028"/>
    </isoform>
</comment>
<comment type="tissue specificity">
    <text evidence="10">Widely expressed with highest levels in skeletal muscle and ovary.</text>
</comment>
<comment type="PTM">
    <text evidence="7 10 15">Phosphorylated on tyrosine residues in response to receptor kinase stimulation. Phosphorylated by RET.</text>
</comment>
<comment type="similarity">
    <text evidence="21">Belongs to the SH2B adapter family.</text>
</comment>
<comment type="sequence caution" evidence="21">
    <conflict type="erroneous initiation">
        <sequence resource="EMBL-CDS" id="AAH10704"/>
    </conflict>
    <text>Truncated N-terminus.</text>
</comment>
<comment type="sequence caution" evidence="21">
    <conflict type="erroneous initiation">
        <sequence resource="EMBL-CDS" id="BAA92537"/>
    </conflict>
    <text>Extended N-terminus.</text>
</comment>
<comment type="sequence caution" evidence="21">
    <conflict type="erroneous initiation">
        <sequence resource="EMBL-CDS" id="BAB55148"/>
    </conflict>
    <text>Truncated N-terminus.</text>
</comment>